<organism>
    <name type="scientific">Shigella flexneri</name>
    <dbReference type="NCBI Taxonomy" id="623"/>
    <lineage>
        <taxon>Bacteria</taxon>
        <taxon>Pseudomonadati</taxon>
        <taxon>Pseudomonadota</taxon>
        <taxon>Gammaproteobacteria</taxon>
        <taxon>Enterobacterales</taxon>
        <taxon>Enterobacteriaceae</taxon>
        <taxon>Shigella</taxon>
    </lineage>
</organism>
<comment type="function">
    <text evidence="1">Part of the ABC transporter FtsEX involved in cellular division. Important for assembly or stability of the septal ring. Encoded in an operon consisting of genes ftsY, ftsE and ftsX (By similarity).</text>
</comment>
<comment type="subunit">
    <text evidence="1">Forms a membrane-associated complex with FtsE.</text>
</comment>
<comment type="subcellular location">
    <subcellularLocation>
        <location evidence="1">Cell inner membrane</location>
        <topology evidence="1">Multi-pass membrane protein</topology>
    </subcellularLocation>
</comment>
<comment type="similarity">
    <text evidence="4">Belongs to the ABC-4 integral membrane protein family. FtsX subfamily.</text>
</comment>
<evidence type="ECO:0000250" key="1"/>
<evidence type="ECO:0000255" key="2"/>
<evidence type="ECO:0000256" key="3">
    <source>
        <dbReference type="SAM" id="MobiDB-lite"/>
    </source>
</evidence>
<evidence type="ECO:0000305" key="4"/>
<reference key="1">
    <citation type="journal article" date="2002" name="Nucleic Acids Res.">
        <title>Genome sequence of Shigella flexneri 2a: insights into pathogenicity through comparison with genomes of Escherichia coli K12 and O157.</title>
        <authorList>
            <person name="Jin Q."/>
            <person name="Yuan Z."/>
            <person name="Xu J."/>
            <person name="Wang Y."/>
            <person name="Shen Y."/>
            <person name="Lu W."/>
            <person name="Wang J."/>
            <person name="Liu H."/>
            <person name="Yang J."/>
            <person name="Yang F."/>
            <person name="Zhang X."/>
            <person name="Zhang J."/>
            <person name="Yang G."/>
            <person name="Wu H."/>
            <person name="Qu D."/>
            <person name="Dong J."/>
            <person name="Sun L."/>
            <person name="Xue Y."/>
            <person name="Zhao A."/>
            <person name="Gao Y."/>
            <person name="Zhu J."/>
            <person name="Kan B."/>
            <person name="Ding K."/>
            <person name="Chen S."/>
            <person name="Cheng H."/>
            <person name="Yao Z."/>
            <person name="He B."/>
            <person name="Chen R."/>
            <person name="Ma D."/>
            <person name="Qiang B."/>
            <person name="Wen Y."/>
            <person name="Hou Y."/>
            <person name="Yu J."/>
        </authorList>
    </citation>
    <scope>NUCLEOTIDE SEQUENCE [LARGE SCALE GENOMIC DNA]</scope>
    <source>
        <strain>301 / Serotype 2a</strain>
    </source>
</reference>
<reference key="2">
    <citation type="journal article" date="2003" name="Infect. Immun.">
        <title>Complete genome sequence and comparative genomics of Shigella flexneri serotype 2a strain 2457T.</title>
        <authorList>
            <person name="Wei J."/>
            <person name="Goldberg M.B."/>
            <person name="Burland V."/>
            <person name="Venkatesan M.M."/>
            <person name="Deng W."/>
            <person name="Fournier G."/>
            <person name="Mayhew G.F."/>
            <person name="Plunkett G. III"/>
            <person name="Rose D.J."/>
            <person name="Darling A."/>
            <person name="Mau B."/>
            <person name="Perna N.T."/>
            <person name="Payne S.M."/>
            <person name="Runyen-Janecky L.J."/>
            <person name="Zhou S."/>
            <person name="Schwartz D.C."/>
            <person name="Blattner F.R."/>
        </authorList>
    </citation>
    <scope>NUCLEOTIDE SEQUENCE [LARGE SCALE GENOMIC DNA]</scope>
    <source>
        <strain>ATCC 700930 / 2457T / Serotype 2a</strain>
    </source>
</reference>
<keyword id="KW-0131">Cell cycle</keyword>
<keyword id="KW-0132">Cell division</keyword>
<keyword id="KW-0997">Cell inner membrane</keyword>
<keyword id="KW-1003">Cell membrane</keyword>
<keyword id="KW-0472">Membrane</keyword>
<keyword id="KW-1185">Reference proteome</keyword>
<keyword id="KW-0812">Transmembrane</keyword>
<keyword id="KW-1133">Transmembrane helix</keyword>
<dbReference type="EMBL" id="AE005674">
    <property type="protein sequence ID" value="AAN44939.2"/>
    <property type="molecule type" value="Genomic_DNA"/>
</dbReference>
<dbReference type="EMBL" id="AE014073">
    <property type="protein sequence ID" value="AAP19243.1"/>
    <property type="molecule type" value="Genomic_DNA"/>
</dbReference>
<dbReference type="RefSeq" id="NP_709232.2">
    <property type="nucleotide sequence ID" value="NC_004337.2"/>
</dbReference>
<dbReference type="RefSeq" id="WP_001042003.1">
    <property type="nucleotide sequence ID" value="NZ_WPGW01000010.1"/>
</dbReference>
<dbReference type="SMR" id="P0AC32"/>
<dbReference type="STRING" id="198214.SF3480"/>
<dbReference type="PaxDb" id="198214-SF3480"/>
<dbReference type="GeneID" id="1026429"/>
<dbReference type="GeneID" id="93778529"/>
<dbReference type="KEGG" id="sfl:SF3480"/>
<dbReference type="KEGG" id="sfx:S4283"/>
<dbReference type="PATRIC" id="fig|198214.7.peg.4101"/>
<dbReference type="HOGENOM" id="CLU_073546_0_0_6"/>
<dbReference type="Proteomes" id="UP000001006">
    <property type="component" value="Chromosome"/>
</dbReference>
<dbReference type="Proteomes" id="UP000002673">
    <property type="component" value="Chromosome"/>
</dbReference>
<dbReference type="GO" id="GO:0032153">
    <property type="term" value="C:cell division site"/>
    <property type="evidence" value="ECO:0007669"/>
    <property type="project" value="TreeGrafter"/>
</dbReference>
<dbReference type="GO" id="GO:0009276">
    <property type="term" value="C:Gram-negative-bacterium-type cell wall"/>
    <property type="evidence" value="ECO:0000250"/>
    <property type="project" value="UniProtKB"/>
</dbReference>
<dbReference type="GO" id="GO:0005886">
    <property type="term" value="C:plasma membrane"/>
    <property type="evidence" value="ECO:0007669"/>
    <property type="project" value="UniProtKB-SubCell"/>
</dbReference>
<dbReference type="GO" id="GO:0051301">
    <property type="term" value="P:cell division"/>
    <property type="evidence" value="ECO:0000250"/>
    <property type="project" value="UniProtKB"/>
</dbReference>
<dbReference type="FunFam" id="3.30.70.3040:FF:000001">
    <property type="entry name" value="Cell division protein FtsX"/>
    <property type="match status" value="1"/>
</dbReference>
<dbReference type="Gene3D" id="3.30.70.3040">
    <property type="match status" value="1"/>
</dbReference>
<dbReference type="InterPro" id="IPR003838">
    <property type="entry name" value="ABC3_permease_C"/>
</dbReference>
<dbReference type="InterPro" id="IPR004513">
    <property type="entry name" value="FtsX"/>
</dbReference>
<dbReference type="InterPro" id="IPR040690">
    <property type="entry name" value="FtsX_ECD"/>
</dbReference>
<dbReference type="InterPro" id="IPR047590">
    <property type="entry name" value="FtsX_proteobact"/>
</dbReference>
<dbReference type="NCBIfam" id="TIGR00439">
    <property type="entry name" value="FtsX_Gneg"/>
    <property type="match status" value="1"/>
</dbReference>
<dbReference type="PANTHER" id="PTHR47755">
    <property type="entry name" value="CELL DIVISION PROTEIN FTSX"/>
    <property type="match status" value="1"/>
</dbReference>
<dbReference type="PANTHER" id="PTHR47755:SF1">
    <property type="entry name" value="CELL DIVISION PROTEIN FTSX"/>
    <property type="match status" value="1"/>
</dbReference>
<dbReference type="Pfam" id="PF02687">
    <property type="entry name" value="FtsX"/>
    <property type="match status" value="1"/>
</dbReference>
<dbReference type="Pfam" id="PF18075">
    <property type="entry name" value="FtsX_ECD"/>
    <property type="match status" value="1"/>
</dbReference>
<dbReference type="PIRSF" id="PIRSF003097">
    <property type="entry name" value="FtsX"/>
    <property type="match status" value="1"/>
</dbReference>
<accession>P0AC32</accession>
<accession>P10122</accession>
<feature type="chain" id="PRO_0000166799" description="Cell division protein FtsX">
    <location>
        <begin position="1"/>
        <end position="352"/>
    </location>
</feature>
<feature type="topological domain" description="Cytoplasmic" evidence="2">
    <location>
        <begin position="1"/>
        <end position="74"/>
    </location>
</feature>
<feature type="transmembrane region" description="Helical" evidence="2">
    <location>
        <begin position="75"/>
        <end position="95"/>
    </location>
</feature>
<feature type="topological domain" description="Periplasmic" evidence="2">
    <location>
        <begin position="96"/>
        <end position="223"/>
    </location>
</feature>
<feature type="transmembrane region" description="Helical" evidence="2">
    <location>
        <begin position="224"/>
        <end position="244"/>
    </location>
</feature>
<feature type="topological domain" description="Cytoplasmic" evidence="2">
    <location>
        <begin position="245"/>
        <end position="275"/>
    </location>
</feature>
<feature type="transmembrane region" description="Helical" evidence="2">
    <location>
        <begin position="276"/>
        <end position="296"/>
    </location>
</feature>
<feature type="topological domain" description="Periplasmic" evidence="2">
    <location>
        <begin position="297"/>
        <end position="322"/>
    </location>
</feature>
<feature type="transmembrane region" description="Helical" evidence="2">
    <location>
        <begin position="323"/>
        <end position="343"/>
    </location>
</feature>
<feature type="topological domain" description="Cytoplasmic" evidence="2">
    <location>
        <begin position="344"/>
        <end position="352"/>
    </location>
</feature>
<feature type="region of interest" description="Disordered" evidence="3">
    <location>
        <begin position="19"/>
        <end position="48"/>
    </location>
</feature>
<sequence length="352" mass="38544">MNKRDAINHIRQFGGRLDRFRKSVGGSGDGGRNAPKRAKSSPKPVNRKTNVFNEQVRYAFHGALQDLKSKPFATFLTVMVIAISLTLPSVCYMVYKNVNQAATQYYPSPQITVYLQKTLDDDAAAGVVAQLQAEQGVEKVNYLSREDALGEFRNWSGFGGALDMLEENPLPAVAVVIPKLDFQGTESLNTLRDRITQINGIDEVRMDDSWFARLAALTGLVGRVSAMIGVLMVAAVFLVIGNSVRLSIFARRDSINVQKLIGATDGFILRPFLYGGALLGFSGALLSLILSEILVLRLSSAVAEVAQVFGTKFDINGLSFDECLLLLLVCSMIGWVAAWLATVQHLRHFTPE</sequence>
<gene>
    <name type="primary">ftsX</name>
    <name type="ordered locus">SF3480</name>
    <name type="ordered locus">S4283</name>
</gene>
<name>FTSX_SHIFL</name>
<protein>
    <recommendedName>
        <fullName>Cell division protein FtsX</fullName>
    </recommendedName>
</protein>
<proteinExistence type="inferred from homology"/>